<keyword id="KW-0007">Acetylation</keyword>
<keyword id="KW-0013">ADP-ribosylation</keyword>
<keyword id="KW-0158">Chromosome</keyword>
<keyword id="KW-0164">Citrullination</keyword>
<keyword id="KW-0238">DNA-binding</keyword>
<keyword id="KW-0379">Hydroxylation</keyword>
<keyword id="KW-0488">Methylation</keyword>
<keyword id="KW-0544">Nucleosome core</keyword>
<keyword id="KW-0539">Nucleus</keyword>
<keyword id="KW-0597">Phosphoprotein</keyword>
<keyword id="KW-1185">Reference proteome</keyword>
<keyword id="KW-0832">Ubl conjugation</keyword>
<dbReference type="EMBL" id="BC102973">
    <property type="protein sequence ID" value="AAI02974.1"/>
    <property type="molecule type" value="mRNA"/>
</dbReference>
<dbReference type="RefSeq" id="NP_001069659.1">
    <property type="nucleotide sequence ID" value="NM_001076191.2"/>
</dbReference>
<dbReference type="SMR" id="Q3SZB8"/>
<dbReference type="STRING" id="9913.ENSBTAP00000044384"/>
<dbReference type="PaxDb" id="9913-ENSBTAP00000044384"/>
<dbReference type="Ensembl" id="ENSBTAT00000015294.6">
    <property type="protein sequence ID" value="ENSBTAP00000044384.3"/>
    <property type="gene ID" value="ENSBTAG00000011508.6"/>
</dbReference>
<dbReference type="GeneID" id="539855"/>
<dbReference type="KEGG" id="bta:539855"/>
<dbReference type="CTD" id="539855"/>
<dbReference type="VEuPathDB" id="HostDB:ENSBTAG00000011508"/>
<dbReference type="VGNC" id="VGNC:83615">
    <property type="gene designation" value="H3-3D"/>
</dbReference>
<dbReference type="eggNOG" id="KOG1745">
    <property type="taxonomic scope" value="Eukaryota"/>
</dbReference>
<dbReference type="GeneTree" id="ENSGT01130000278322"/>
<dbReference type="HOGENOM" id="CLU_078295_4_0_1"/>
<dbReference type="InParanoid" id="Q3SZB8"/>
<dbReference type="OMA" id="MTRPHRY"/>
<dbReference type="OrthoDB" id="9699479at2759"/>
<dbReference type="TreeFam" id="TF314241"/>
<dbReference type="Proteomes" id="UP000009136">
    <property type="component" value="Chromosome 16"/>
</dbReference>
<dbReference type="Bgee" id="ENSBTAG00000011508">
    <property type="expression patterns" value="Expressed in semen and 34 other cell types or tissues"/>
</dbReference>
<dbReference type="GO" id="GO:0000786">
    <property type="term" value="C:nucleosome"/>
    <property type="evidence" value="ECO:0007669"/>
    <property type="project" value="UniProtKB-KW"/>
</dbReference>
<dbReference type="GO" id="GO:0005634">
    <property type="term" value="C:nucleus"/>
    <property type="evidence" value="ECO:0000318"/>
    <property type="project" value="GO_Central"/>
</dbReference>
<dbReference type="GO" id="GO:0003677">
    <property type="term" value="F:DNA binding"/>
    <property type="evidence" value="ECO:0007669"/>
    <property type="project" value="UniProtKB-KW"/>
</dbReference>
<dbReference type="GO" id="GO:0046982">
    <property type="term" value="F:protein heterodimerization activity"/>
    <property type="evidence" value="ECO:0007669"/>
    <property type="project" value="InterPro"/>
</dbReference>
<dbReference type="GO" id="GO:0030527">
    <property type="term" value="F:structural constituent of chromatin"/>
    <property type="evidence" value="ECO:0007669"/>
    <property type="project" value="InterPro"/>
</dbReference>
<dbReference type="CDD" id="cd22911">
    <property type="entry name" value="HFD_H3"/>
    <property type="match status" value="1"/>
</dbReference>
<dbReference type="FunFam" id="1.10.20.10:FF:000054">
    <property type="entry name" value="Putative histone H1.5-like"/>
    <property type="match status" value="1"/>
</dbReference>
<dbReference type="Gene3D" id="1.10.20.10">
    <property type="entry name" value="Histone, subunit A"/>
    <property type="match status" value="1"/>
</dbReference>
<dbReference type="InterPro" id="IPR009072">
    <property type="entry name" value="Histone-fold"/>
</dbReference>
<dbReference type="InterPro" id="IPR007125">
    <property type="entry name" value="Histone_H2A/H2B/H3"/>
</dbReference>
<dbReference type="InterPro" id="IPR000164">
    <property type="entry name" value="Histone_H3/CENP-A"/>
</dbReference>
<dbReference type="PANTHER" id="PTHR11426">
    <property type="entry name" value="HISTONE H3"/>
    <property type="match status" value="1"/>
</dbReference>
<dbReference type="Pfam" id="PF00125">
    <property type="entry name" value="Histone"/>
    <property type="match status" value="1"/>
</dbReference>
<dbReference type="PRINTS" id="PR00622">
    <property type="entry name" value="HISTONEH3"/>
</dbReference>
<dbReference type="SMART" id="SM00428">
    <property type="entry name" value="H3"/>
    <property type="match status" value="1"/>
</dbReference>
<dbReference type="SUPFAM" id="SSF47113">
    <property type="entry name" value="Histone-fold"/>
    <property type="match status" value="1"/>
</dbReference>
<dbReference type="PROSITE" id="PS00959">
    <property type="entry name" value="HISTONE_H3_2"/>
    <property type="match status" value="1"/>
</dbReference>
<organism>
    <name type="scientific">Bos taurus</name>
    <name type="common">Bovine</name>
    <dbReference type="NCBI Taxonomy" id="9913"/>
    <lineage>
        <taxon>Eukaryota</taxon>
        <taxon>Metazoa</taxon>
        <taxon>Chordata</taxon>
        <taxon>Craniata</taxon>
        <taxon>Vertebrata</taxon>
        <taxon>Euteleostomi</taxon>
        <taxon>Mammalia</taxon>
        <taxon>Eutheria</taxon>
        <taxon>Laurasiatheria</taxon>
        <taxon>Artiodactyla</taxon>
        <taxon>Ruminantia</taxon>
        <taxon>Pecora</taxon>
        <taxon>Bovidae</taxon>
        <taxon>Bovinae</taxon>
        <taxon>Bos</taxon>
    </lineage>
</organism>
<name>H3CL_BOVIN</name>
<comment type="function">
    <text>Core component of nucleosome. Nucleosomes wrap and compact DNA into chromatin, limiting DNA accessibility to the cellular machineries which require DNA as a template. Histones thereby play a central role in transcription regulation, DNA repair, DNA replication and chromosomal stability. DNA accessibility is regulated via a complex set of post-translational modifications of histones, also called histone code, and nucleosome remodeling.</text>
</comment>
<comment type="subunit">
    <text>The nucleosome is a histone octamer containing two molecules each of H2A, H2B, H3 and H4 assembled in one H3-H4 heterotetramer and two H2A-H2B heterodimers. The octamer wraps approximately 147 bp of DNA.</text>
</comment>
<comment type="subcellular location">
    <subcellularLocation>
        <location>Nucleus</location>
    </subcellularLocation>
    <subcellularLocation>
        <location>Chromosome</location>
    </subcellularLocation>
</comment>
<comment type="PTM">
    <text evidence="5">Acetylation is generally linked to gene activation. Acetylation on Lys-19 favors methylation at Arg-18 (By similarity).</text>
</comment>
<comment type="PTM">
    <text evidence="1">Citrullination at Arg-18 by PADI4 impairs methylation and represses transcription.</text>
</comment>
<comment type="PTM">
    <text evidence="5">Asymmetric dimethylation at Arg-18 (H3R17me2a) by CARM1 is linked to gene activation. Asymmetric dimethylation at Arg-3 (H3R2me2a) by PRMT6 is linked to gene repression and is mutually exclusive with H3 Lys-5 methylation (H3K4me2 and H3K4me3). H3R2me2a is present at the 3' of genes regardless of their transcription state and is enriched on inactive promoters, while it is absent on active promoters (By similarity).</text>
</comment>
<comment type="PTM">
    <text evidence="5">Methylation at Lys-5 (H3K4me) and Lys-80 (H3K79me) are linked to gene activation. Methylation at Lys-5 (H3K4me) facilitates subsequent acetylation of H3 and H4. Methylation at Lys-80 (H3K79me) is associated with DNA double-strand break (DSB) responses and is a specific target for TP53BP1. Methylation at Lys-10 (H3K9me) and Lys-28 (H3K27me) are linked to gene repression. Methylation at Lys-10 (H3K9me) is a specific target for HP1 proteins (CBX1, CBX3 and CBX5) and prevents subsequent phosphorylation at Ser-11 (H3S10ph) and acetylation of H3 and H4. Methylation at Lys-5 (H3K4me) and Lys-80 (H3K79me) require preliminary monoubiquitination of H2B at 'Lys-120'. Methylation at Lys-10 (H3K9me) and Lys-28 (H3K27me) are enriched in inactive X chromosome chromatin. Monomethylation at Lys-57 (H3K56me1) by EHMT2/G9A in G1 phase promotes interaction with PCNA and is required for DNA replication (By similarity).</text>
</comment>
<comment type="PTM">
    <text evidence="5">Phosphorylated at Thr-4 (H3T3ph) by HASPIN during prophase and dephosphorylated during anaphase. Phosphorylation at Ser-11 (H3S10ph) by AURKB is crucial for chromosome condensation and cell-cycle progression during mitosis and meiosis. In addition phosphorylation at Ser-11 (H3S10ph) by RPS6KA4 and RPS6KA5 is important during interphase because it enables the transcription of genes following external stimulation, like mitogens, stress, growth factors or UV irradiation and result in the activation of genes, such as c-fos and c-jun. Phosphorylation at Ser-11 (H3S10ph), which is linked to gene activation, prevents methylation at Lys-10 (H3K9me) but facilitates acetylation of H3 and H4. Phosphorylation at Ser-11 (H3S10ph) by AURKB mediates the dissociation of HP1 proteins (CBX1, CBX3 and CBX5) from heterochromatin. Phosphorylation at Ser-11 (H3S10ph) is also an essential regulatory mechanism for neoplastic cell transformation. Phosphorylated at Ser-29 (H3S28ph) by MAP3K20 isoform 1, RPS6KA5 or AURKB during mitosis or upon ultraviolet B irradiation. Phosphorylation at Thr-7 (H3T6ph) by PRKCB is a specific tag for epigenetic transcriptional activation that prevents demethylation of Lys-5 (H3K4me) by LSD1/KDM1A. At centromeres, specifically phosphorylated at Thr-12 (H3T11ph) from prophase to early anaphase, by DAPK3 and PKN1. Phosphorylation at Thr-12 (H3T11ph) by PKN1 or isoform M2 of PKM (PKM2) is a specific tag for epigenetic transcriptional activation that promotes demethylation of Lys-10 (H3K9me) by KDM4C/JMJD2C. Phosphorylation at Tyr-42 (H3Y41ph) by JAK2 promotes exclusion of CBX5 (HP1 alpha) from chromatin (By similarity).</text>
</comment>
<comment type="PTM">
    <text evidence="5">Lysine deamination at Lys-5 (H3K4all) to form allysine is mediated by LOXL2. Allysine formation by LOXL2 only takes place on H3K4me3 and results in gene repression (By similarity).</text>
</comment>
<comment type="PTM">
    <text evidence="4">Butyrylation of histones marks active promoters and competes with histone acetylation. It is present during late spermatogenesis.</text>
</comment>
<comment type="PTM">
    <text evidence="2">Succinylation at Lys-80 (H3K79succ) by KAT2A takes place with a maximum frequency around the transcription start sites of genes. It gives a specific tag for epigenetic transcription activation.</text>
</comment>
<comment type="PTM">
    <text evidence="2">Serine ADP-ribosylation constitutes the primary form of ADP-ribosylation of proteins in response to DNA damage. Serine ADP-ribosylation at Ser-11 (H3S10ADPr) is mutually exclusive with phosphorylation at Ser-11 (H3S10ph) and impairs acetylation at Lys-10 (H3K9ac).</text>
</comment>
<comment type="similarity">
    <text evidence="6">Belongs to the histone H3 family.</text>
</comment>
<proteinExistence type="evidence at transcript level"/>
<reference key="1">
    <citation type="submission" date="2005-08" db="EMBL/GenBank/DDBJ databases">
        <authorList>
            <consortium name="NIH - Mammalian Gene Collection (MGC) project"/>
        </authorList>
    </citation>
    <scope>NUCLEOTIDE SEQUENCE [LARGE SCALE MRNA]</scope>
    <source>
        <strain>Crossbred X Angus</strain>
        <tissue>Liver</tissue>
    </source>
</reference>
<evidence type="ECO:0000250" key="1"/>
<evidence type="ECO:0000250" key="2">
    <source>
        <dbReference type="UniProtKB" id="P68431"/>
    </source>
</evidence>
<evidence type="ECO:0000250" key="3">
    <source>
        <dbReference type="UniProtKB" id="P68432"/>
    </source>
</evidence>
<evidence type="ECO:0000250" key="4">
    <source>
        <dbReference type="UniProtKB" id="P68433"/>
    </source>
</evidence>
<evidence type="ECO:0000250" key="5">
    <source>
        <dbReference type="UniProtKB" id="P84243"/>
    </source>
</evidence>
<evidence type="ECO:0000305" key="6"/>
<feature type="initiator methionine" description="Removed" evidence="6">
    <location>
        <position position="1"/>
    </location>
</feature>
<feature type="chain" id="PRO_0000253959" description="Histone H3.3C-like">
    <location>
        <begin position="2"/>
        <end position="136"/>
    </location>
</feature>
<feature type="modified residue" description="Asymmetric dimethylarginine; by PRMT6; alternate" evidence="2">
    <location>
        <position position="3"/>
    </location>
</feature>
<feature type="modified residue" description="Citrulline; alternate" evidence="5">
    <location>
        <position position="3"/>
    </location>
</feature>
<feature type="modified residue" description="Phosphothreonine; by HASPIN" evidence="2">
    <location>
        <position position="4"/>
    </location>
</feature>
<feature type="modified residue" description="Allysine; alternate" evidence="5">
    <location>
        <position position="5"/>
    </location>
</feature>
<feature type="modified residue" description="N6,N6,N6-trimethyllysine; alternate" evidence="2">
    <location>
        <position position="5"/>
    </location>
</feature>
<feature type="modified residue" description="N6,N6-dimethyllysine; alternate" evidence="2">
    <location>
        <position position="5"/>
    </location>
</feature>
<feature type="modified residue" description="N6-(2-hydroxyisobutyryl)lysine; alternate" evidence="2">
    <location>
        <position position="5"/>
    </location>
</feature>
<feature type="modified residue" description="N6-(beta-hydroxybutyryl)lysine; alternate" evidence="4">
    <location>
        <position position="5"/>
    </location>
</feature>
<feature type="modified residue" description="N6-acetyllysine; alternate" evidence="2">
    <location>
        <position position="5"/>
    </location>
</feature>
<feature type="modified residue" description="N6-methyllysine; alternate" evidence="2">
    <location>
        <position position="5"/>
    </location>
</feature>
<feature type="modified residue" description="Phosphothreonine; by PKC" evidence="2">
    <location>
        <position position="7"/>
    </location>
</feature>
<feature type="modified residue" description="N6,N6,N6-trimethyllysine; alternate" evidence="3">
    <location>
        <position position="10"/>
    </location>
</feature>
<feature type="modified residue" description="N6,N6-dimethyllysine; alternate" evidence="3">
    <location>
        <position position="10"/>
    </location>
</feature>
<feature type="modified residue" description="N6-(2-hydroxyisobutyryl)lysine; alternate" evidence="2">
    <location>
        <position position="10"/>
    </location>
</feature>
<feature type="modified residue" description="N6-acetyllysine; alternate" evidence="2">
    <location>
        <position position="10"/>
    </location>
</feature>
<feature type="modified residue" description="N6-methyllysine; alternate" evidence="3">
    <location>
        <position position="10"/>
    </location>
</feature>
<feature type="modified residue" description="ADP-ribosylserine; alternate" evidence="2">
    <location>
        <position position="11"/>
    </location>
</feature>
<feature type="modified residue" description="Phosphoserine; alternate; by AURKB, AURKC, RPS6KA3, RPS6KA4 and RPS6KA5" evidence="3">
    <location>
        <position position="11"/>
    </location>
</feature>
<feature type="modified residue" description="Phosphothreonine; by PKC" evidence="2">
    <location>
        <position position="12"/>
    </location>
</feature>
<feature type="modified residue" description="N6-(2-hydroxyisobutyryl)lysine; alternate" evidence="2">
    <location>
        <position position="15"/>
    </location>
</feature>
<feature type="modified residue" description="N6-(beta-hydroxybutyryl)lysine; alternate" evidence="4">
    <location>
        <position position="15"/>
    </location>
</feature>
<feature type="modified residue" description="N6-acetyllysine; alternate" evidence="3">
    <location>
        <position position="15"/>
    </location>
</feature>
<feature type="modified residue" description="N6-glutaryllysine; alternate" evidence="5">
    <location>
        <position position="15"/>
    </location>
</feature>
<feature type="modified residue" description="N6-succinyllysine; alternate" evidence="2">
    <location>
        <position position="15"/>
    </location>
</feature>
<feature type="modified residue" description="Asymmetric dimethylarginine; by CARM1; alternate" evidence="2">
    <location>
        <position position="18"/>
    </location>
</feature>
<feature type="modified residue" description="Citrulline; alternate" evidence="5">
    <location>
        <position position="18"/>
    </location>
</feature>
<feature type="modified residue" description="N6-(2-hydroxyisobutyryl)lysine; alternate" evidence="2">
    <location>
        <position position="19"/>
    </location>
</feature>
<feature type="modified residue" description="N6-(beta-hydroxybutyryl)lysine; alternate" evidence="4">
    <location>
        <position position="19"/>
    </location>
</feature>
<feature type="modified residue" description="N6-acetyllysine; alternate" evidence="2">
    <location>
        <position position="19"/>
    </location>
</feature>
<feature type="modified residue" description="N6-butyryllysine; alternate" evidence="4">
    <location>
        <position position="19"/>
    </location>
</feature>
<feature type="modified residue" description="N6-glutaryllysine; alternate" evidence="5">
    <location>
        <position position="19"/>
    </location>
</feature>
<feature type="modified residue" description="N6-methyllysine; alternate" evidence="2">
    <location>
        <position position="19"/>
    </location>
</feature>
<feature type="modified residue" description="N6,N6,N6-trimethyllysine; alternate" evidence="3">
    <location>
        <position position="28"/>
    </location>
</feature>
<feature type="modified residue" description="N6,N6-dimethyllysine; alternate" evidence="3">
    <location>
        <position position="28"/>
    </location>
</feature>
<feature type="modified residue" description="N6-(2-hydroxyisobutyryl)lysine; alternate" evidence="2">
    <location>
        <position position="28"/>
    </location>
</feature>
<feature type="modified residue" description="N6-acetyllysine; alternate" evidence="2">
    <location>
        <position position="28"/>
    </location>
</feature>
<feature type="modified residue" description="N6-glutaryllysine; alternate" evidence="5">
    <location>
        <position position="28"/>
    </location>
</feature>
<feature type="modified residue" description="N6-methyllysine; alternate" evidence="3">
    <location>
        <position position="28"/>
    </location>
</feature>
<feature type="modified residue" description="ADP-ribosylserine; alternate" evidence="2">
    <location>
        <position position="29"/>
    </location>
</feature>
<feature type="modified residue" description="Phosphoserine; alternate; by AURKB, AURKC and RPS6KA5" evidence="3">
    <location>
        <position position="29"/>
    </location>
</feature>
<feature type="modified residue" description="Phosphoserine" evidence="5">
    <location>
        <position position="32"/>
    </location>
</feature>
<feature type="modified residue" description="N6-methyllysine" evidence="2">
    <location>
        <position position="38"/>
    </location>
</feature>
<feature type="modified residue" description="Phosphotyrosine" evidence="2">
    <location>
        <position position="42"/>
    </location>
</feature>
<feature type="modified residue" description="N6,N6,N6-trimethyllysine; alternate" evidence="2">
    <location>
        <position position="57"/>
    </location>
</feature>
<feature type="modified residue" description="N6-(2-hydroxyisobutyryl)lysine; alternate" evidence="2">
    <location>
        <position position="57"/>
    </location>
</feature>
<feature type="modified residue" description="N6-(beta-hydroxybutyryl)lysine; alternate" evidence="4">
    <location>
        <position position="57"/>
    </location>
</feature>
<feature type="modified residue" description="N6-acetyllysine; alternate" evidence="2">
    <location>
        <position position="57"/>
    </location>
</feature>
<feature type="modified residue" description="N6-glutaryllysine; alternate" evidence="5">
    <location>
        <position position="57"/>
    </location>
</feature>
<feature type="modified residue" description="N6-methyllysine; by EHMT2; alternate" evidence="2">
    <location>
        <position position="57"/>
    </location>
</feature>
<feature type="modified residue" description="N6-succinyllysine; alternate" evidence="2">
    <location>
        <position position="57"/>
    </location>
</feature>
<feature type="modified residue" description="Phosphoserine" evidence="2">
    <location>
        <position position="58"/>
    </location>
</feature>
<feature type="modified residue" description="N6-(2-hydroxyisobutyryl)lysine; alternate" evidence="2">
    <location>
        <position position="65"/>
    </location>
</feature>
<feature type="modified residue" description="N6-methyllysine; alternate" evidence="2">
    <location>
        <position position="65"/>
    </location>
</feature>
<feature type="modified residue" description="N6,N6,N6-trimethyllysine; alternate" evidence="4">
    <location>
        <position position="80"/>
    </location>
</feature>
<feature type="modified residue" description="N6,N6-dimethyllysine; alternate" evidence="2">
    <location>
        <position position="80"/>
    </location>
</feature>
<feature type="modified residue" description="N6-(2-hydroxyisobutyryl)lysine; alternate" evidence="2">
    <location>
        <position position="80"/>
    </location>
</feature>
<feature type="modified residue" description="N6-acetyllysine; alternate" evidence="2">
    <location>
        <position position="80"/>
    </location>
</feature>
<feature type="modified residue" description="N6-glutaryllysine; alternate" evidence="5">
    <location>
        <position position="80"/>
    </location>
</feature>
<feature type="modified residue" description="N6-methyllysine; alternate" evidence="2">
    <location>
        <position position="80"/>
    </location>
</feature>
<feature type="modified residue" description="N6-succinyllysine; alternate" evidence="2">
    <location>
        <position position="80"/>
    </location>
</feature>
<feature type="modified residue" description="Phosphothreonine" evidence="2">
    <location>
        <position position="81"/>
    </location>
</feature>
<feature type="modified residue" description="Phosphoserine" evidence="5">
    <location>
        <position position="87"/>
    </location>
</feature>
<sequence length="136" mass="15678">MARTKRTAYKSTGGKVPRKQLVIEAAGKSAPSTSGMTKPHRYRPGTVALREIRPYQKSTHFLIRKLPFQRLVREIAQDFKTDLKFQSAAIRTLQEASEAYLVVFLESKQHSNLARMYSQNKSFPWLEGKRRQPQPM</sequence>
<accession>Q3SZB8</accession>
<protein>
    <recommendedName>
        <fullName>Histone H3.3C-like</fullName>
    </recommendedName>
</protein>